<proteinExistence type="evidence at transcript level"/>
<gene>
    <name type="ordered locus">At2g14540</name>
    <name type="ORF">T13P21.8</name>
</gene>
<comment type="function">
    <text evidence="1">Probable serine protease inhibitor.</text>
</comment>
<comment type="domain">
    <text evidence="1">The reactive center loop (RCL) extends out from the body of the protein and directs binding to the target protease. The protease cleaves the serpin at the reactive site within the RCL, establishing a covalent linkage between the carboxyl group of the serpin reactive site and the serine hydroxyl of the protease. The resulting inactive serpin-protease complex is highly stable (By similarity).</text>
</comment>
<comment type="similarity">
    <text evidence="4">Belongs to the serpin family.</text>
</comment>
<accession>Q9ZQR6</accession>
<dbReference type="EMBL" id="AC006067">
    <property type="protein sequence ID" value="AAD15462.1"/>
    <property type="molecule type" value="Genomic_DNA"/>
</dbReference>
<dbReference type="EMBL" id="CP002685">
    <property type="protein sequence ID" value="AEC06310.1"/>
    <property type="molecule type" value="Genomic_DNA"/>
</dbReference>
<dbReference type="EMBL" id="AY072119">
    <property type="protein sequence ID" value="AAL59941.1"/>
    <property type="molecule type" value="mRNA"/>
</dbReference>
<dbReference type="EMBL" id="AY122942">
    <property type="protein sequence ID" value="AAM67475.1"/>
    <property type="molecule type" value="mRNA"/>
</dbReference>
<dbReference type="PIR" id="D84518">
    <property type="entry name" value="D84518"/>
</dbReference>
<dbReference type="RefSeq" id="NP_179060.1">
    <property type="nucleotide sequence ID" value="NM_127017.2"/>
</dbReference>
<dbReference type="SMR" id="Q9ZQR6"/>
<dbReference type="FunCoup" id="Q9ZQR6">
    <property type="interactions" value="34"/>
</dbReference>
<dbReference type="STRING" id="3702.Q9ZQR6"/>
<dbReference type="iPTMnet" id="Q9ZQR6"/>
<dbReference type="PaxDb" id="3702-AT2G14540.1"/>
<dbReference type="EnsemblPlants" id="AT2G14540.1">
    <property type="protein sequence ID" value="AT2G14540.1"/>
    <property type="gene ID" value="AT2G14540"/>
</dbReference>
<dbReference type="GeneID" id="815941"/>
<dbReference type="Gramene" id="AT2G14540.1">
    <property type="protein sequence ID" value="AT2G14540.1"/>
    <property type="gene ID" value="AT2G14540"/>
</dbReference>
<dbReference type="KEGG" id="ath:AT2G14540"/>
<dbReference type="Araport" id="AT2G14540"/>
<dbReference type="TAIR" id="AT2G14540">
    <property type="gene designation" value="SRP2"/>
</dbReference>
<dbReference type="eggNOG" id="KOG2392">
    <property type="taxonomic scope" value="Eukaryota"/>
</dbReference>
<dbReference type="HOGENOM" id="CLU_023330_4_0_1"/>
<dbReference type="InParanoid" id="Q9ZQR6"/>
<dbReference type="OMA" id="RSGLHAQ"/>
<dbReference type="PhylomeDB" id="Q9ZQR6"/>
<dbReference type="PRO" id="PR:Q9ZQR6"/>
<dbReference type="Proteomes" id="UP000006548">
    <property type="component" value="Chromosome 2"/>
</dbReference>
<dbReference type="ExpressionAtlas" id="Q9ZQR6">
    <property type="expression patterns" value="baseline and differential"/>
</dbReference>
<dbReference type="GO" id="GO:0005615">
    <property type="term" value="C:extracellular space"/>
    <property type="evidence" value="ECO:0007669"/>
    <property type="project" value="InterPro"/>
</dbReference>
<dbReference type="GO" id="GO:0005634">
    <property type="term" value="C:nucleus"/>
    <property type="evidence" value="ECO:0000314"/>
    <property type="project" value="TAIR"/>
</dbReference>
<dbReference type="GO" id="GO:0004867">
    <property type="term" value="F:serine-type endopeptidase inhibitor activity"/>
    <property type="evidence" value="ECO:0007669"/>
    <property type="project" value="UniProtKB-KW"/>
</dbReference>
<dbReference type="GO" id="GO:0006974">
    <property type="term" value="P:DNA damage response"/>
    <property type="evidence" value="ECO:0000270"/>
    <property type="project" value="TAIR"/>
</dbReference>
<dbReference type="GO" id="GO:0006281">
    <property type="term" value="P:DNA repair"/>
    <property type="evidence" value="ECO:0000315"/>
    <property type="project" value="TAIR"/>
</dbReference>
<dbReference type="CDD" id="cd02043">
    <property type="entry name" value="serpinP_plants"/>
    <property type="match status" value="1"/>
</dbReference>
<dbReference type="Gene3D" id="2.30.39.10">
    <property type="entry name" value="Alpha-1-antitrypsin, domain 1"/>
    <property type="match status" value="1"/>
</dbReference>
<dbReference type="Gene3D" id="3.30.497.10">
    <property type="entry name" value="Antithrombin, subunit I, domain 2"/>
    <property type="match status" value="1"/>
</dbReference>
<dbReference type="InterPro" id="IPR023795">
    <property type="entry name" value="Serpin_CS"/>
</dbReference>
<dbReference type="InterPro" id="IPR023796">
    <property type="entry name" value="Serpin_dom"/>
</dbReference>
<dbReference type="InterPro" id="IPR000215">
    <property type="entry name" value="Serpin_fam"/>
</dbReference>
<dbReference type="InterPro" id="IPR036186">
    <property type="entry name" value="Serpin_sf"/>
</dbReference>
<dbReference type="InterPro" id="IPR042178">
    <property type="entry name" value="Serpin_sf_1"/>
</dbReference>
<dbReference type="InterPro" id="IPR042185">
    <property type="entry name" value="Serpin_sf_2"/>
</dbReference>
<dbReference type="PANTHER" id="PTHR11461:SF347">
    <property type="entry name" value="SERINE PROTEASE INHIBITOR (SERPIN) FAMILY PROTEIN-RELATED"/>
    <property type="match status" value="1"/>
</dbReference>
<dbReference type="PANTHER" id="PTHR11461">
    <property type="entry name" value="SERINE PROTEASE INHIBITOR, SERPIN"/>
    <property type="match status" value="1"/>
</dbReference>
<dbReference type="Pfam" id="PF00079">
    <property type="entry name" value="Serpin"/>
    <property type="match status" value="1"/>
</dbReference>
<dbReference type="SMART" id="SM00093">
    <property type="entry name" value="SERPIN"/>
    <property type="match status" value="1"/>
</dbReference>
<dbReference type="SUPFAM" id="SSF56574">
    <property type="entry name" value="Serpins"/>
    <property type="match status" value="1"/>
</dbReference>
<dbReference type="PROSITE" id="PS00284">
    <property type="entry name" value="SERPIN"/>
    <property type="match status" value="1"/>
</dbReference>
<sequence>MDSKRKNQELSTSETADPSLSKTNKKQKIDMQEAMKNQNEVSLLLVGKVISAVAKNSNCVFSPASINAVLTVTAANTDNKTLRSFILSFLKSSSTEETNAIFHELASVVFKDGSETGGPKIAAVNGVWMEQSLSCNPDWEDLFLNFFKASFAKVDFRHKAEEVRLDVNTWASRHTNDLIKEILPRGSVTSLTNWIYGNALYFKGAWEKAFDKSMTRDKPFHLLNGKSVSVPFMRSYEKQFIEAYDGFKVLRLPYRQGRDDTNREFSMYLYLPDKKGELDNLLERITSNPGFLDSHIPEYRVDVGDFRIPKFKIEFGFEASSVFNDFELNVSLHQKALIEIDEEGTEAAAATTVVVVTGSCLWEPKKKIDFVADHPFLFLIREDKTGTLLFAGQIFDPSELSSALDRA</sequence>
<organism>
    <name type="scientific">Arabidopsis thaliana</name>
    <name type="common">Mouse-ear cress</name>
    <dbReference type="NCBI Taxonomy" id="3702"/>
    <lineage>
        <taxon>Eukaryota</taxon>
        <taxon>Viridiplantae</taxon>
        <taxon>Streptophyta</taxon>
        <taxon>Embryophyta</taxon>
        <taxon>Tracheophyta</taxon>
        <taxon>Spermatophyta</taxon>
        <taxon>Magnoliopsida</taxon>
        <taxon>eudicotyledons</taxon>
        <taxon>Gunneridae</taxon>
        <taxon>Pentapetalae</taxon>
        <taxon>rosids</taxon>
        <taxon>malvids</taxon>
        <taxon>Brassicales</taxon>
        <taxon>Brassicaceae</taxon>
        <taxon>Camelineae</taxon>
        <taxon>Arabidopsis</taxon>
    </lineage>
</organism>
<protein>
    <recommendedName>
        <fullName>Serpin-Z2</fullName>
    </recommendedName>
    <alternativeName>
        <fullName>ArathZ2</fullName>
    </alternativeName>
</protein>
<name>SPZ2_ARATH</name>
<keyword id="KW-0646">Protease inhibitor</keyword>
<keyword id="KW-1185">Reference proteome</keyword>
<keyword id="KW-0722">Serine protease inhibitor</keyword>
<evidence type="ECO:0000250" key="1"/>
<evidence type="ECO:0000255" key="2"/>
<evidence type="ECO:0000256" key="3">
    <source>
        <dbReference type="SAM" id="MobiDB-lite"/>
    </source>
</evidence>
<evidence type="ECO:0000305" key="4"/>
<reference key="1">
    <citation type="journal article" date="1999" name="Nature">
        <title>Sequence and analysis of chromosome 2 of the plant Arabidopsis thaliana.</title>
        <authorList>
            <person name="Lin X."/>
            <person name="Kaul S."/>
            <person name="Rounsley S.D."/>
            <person name="Shea T.P."/>
            <person name="Benito M.-I."/>
            <person name="Town C.D."/>
            <person name="Fujii C.Y."/>
            <person name="Mason T.M."/>
            <person name="Bowman C.L."/>
            <person name="Barnstead M.E."/>
            <person name="Feldblyum T.V."/>
            <person name="Buell C.R."/>
            <person name="Ketchum K.A."/>
            <person name="Lee J.J."/>
            <person name="Ronning C.M."/>
            <person name="Koo H.L."/>
            <person name="Moffat K.S."/>
            <person name="Cronin L.A."/>
            <person name="Shen M."/>
            <person name="Pai G."/>
            <person name="Van Aken S."/>
            <person name="Umayam L."/>
            <person name="Tallon L.J."/>
            <person name="Gill J.E."/>
            <person name="Adams M.D."/>
            <person name="Carrera A.J."/>
            <person name="Creasy T.H."/>
            <person name="Goodman H.M."/>
            <person name="Somerville C.R."/>
            <person name="Copenhaver G.P."/>
            <person name="Preuss D."/>
            <person name="Nierman W.C."/>
            <person name="White O."/>
            <person name="Eisen J.A."/>
            <person name="Salzberg S.L."/>
            <person name="Fraser C.M."/>
            <person name="Venter J.C."/>
        </authorList>
    </citation>
    <scope>NUCLEOTIDE SEQUENCE [LARGE SCALE GENOMIC DNA]</scope>
    <source>
        <strain>cv. Columbia</strain>
    </source>
</reference>
<reference key="2">
    <citation type="journal article" date="2017" name="Plant J.">
        <title>Araport11: a complete reannotation of the Arabidopsis thaliana reference genome.</title>
        <authorList>
            <person name="Cheng C.Y."/>
            <person name="Krishnakumar V."/>
            <person name="Chan A.P."/>
            <person name="Thibaud-Nissen F."/>
            <person name="Schobel S."/>
            <person name="Town C.D."/>
        </authorList>
    </citation>
    <scope>GENOME REANNOTATION</scope>
    <source>
        <strain>cv. Columbia</strain>
    </source>
</reference>
<reference key="3">
    <citation type="journal article" date="2003" name="Science">
        <title>Empirical analysis of transcriptional activity in the Arabidopsis genome.</title>
        <authorList>
            <person name="Yamada K."/>
            <person name="Lim J."/>
            <person name="Dale J.M."/>
            <person name="Chen H."/>
            <person name="Shinn P."/>
            <person name="Palm C.J."/>
            <person name="Southwick A.M."/>
            <person name="Wu H.C."/>
            <person name="Kim C.J."/>
            <person name="Nguyen M."/>
            <person name="Pham P.K."/>
            <person name="Cheuk R.F."/>
            <person name="Karlin-Newmann G."/>
            <person name="Liu S.X."/>
            <person name="Lam B."/>
            <person name="Sakano H."/>
            <person name="Wu T."/>
            <person name="Yu G."/>
            <person name="Miranda M."/>
            <person name="Quach H.L."/>
            <person name="Tripp M."/>
            <person name="Chang C.H."/>
            <person name="Lee J.M."/>
            <person name="Toriumi M.J."/>
            <person name="Chan M.M."/>
            <person name="Tang C.C."/>
            <person name="Onodera C.S."/>
            <person name="Deng J.M."/>
            <person name="Akiyama K."/>
            <person name="Ansari Y."/>
            <person name="Arakawa T."/>
            <person name="Banh J."/>
            <person name="Banno F."/>
            <person name="Bowser L."/>
            <person name="Brooks S.Y."/>
            <person name="Carninci P."/>
            <person name="Chao Q."/>
            <person name="Choy N."/>
            <person name="Enju A."/>
            <person name="Goldsmith A.D."/>
            <person name="Gurjal M."/>
            <person name="Hansen N.F."/>
            <person name="Hayashizaki Y."/>
            <person name="Johnson-Hopson C."/>
            <person name="Hsuan V.W."/>
            <person name="Iida K."/>
            <person name="Karnes M."/>
            <person name="Khan S."/>
            <person name="Koesema E."/>
            <person name="Ishida J."/>
            <person name="Jiang P.X."/>
            <person name="Jones T."/>
            <person name="Kawai J."/>
            <person name="Kamiya A."/>
            <person name="Meyers C."/>
            <person name="Nakajima M."/>
            <person name="Narusaka M."/>
            <person name="Seki M."/>
            <person name="Sakurai T."/>
            <person name="Satou M."/>
            <person name="Tamse R."/>
            <person name="Vaysberg M."/>
            <person name="Wallender E.K."/>
            <person name="Wong C."/>
            <person name="Yamamura Y."/>
            <person name="Yuan S."/>
            <person name="Shinozaki K."/>
            <person name="Davis R.W."/>
            <person name="Theologis A."/>
            <person name="Ecker J.R."/>
        </authorList>
    </citation>
    <scope>NUCLEOTIDE SEQUENCE [LARGE SCALE MRNA]</scope>
    <source>
        <strain>cv. Columbia</strain>
    </source>
</reference>
<reference key="4">
    <citation type="journal article" date="2008" name="Funct. Integr. Genomics">
        <title>Serpins in plants and green algae.</title>
        <authorList>
            <person name="Roberts T.H."/>
            <person name="Hejgaard J."/>
        </authorList>
    </citation>
    <scope>GENE FAMILY</scope>
    <scope>NOMENCLATURE</scope>
</reference>
<feature type="chain" id="PRO_0000334547" description="Serpin-Z2">
    <location>
        <begin position="1"/>
        <end position="407"/>
    </location>
</feature>
<feature type="region of interest" description="Disordered" evidence="3">
    <location>
        <begin position="1"/>
        <end position="28"/>
    </location>
</feature>
<feature type="region of interest" description="RCL">
    <location>
        <begin position="344"/>
        <end position="368"/>
    </location>
</feature>
<feature type="compositionally biased region" description="Polar residues" evidence="3">
    <location>
        <begin position="9"/>
        <end position="22"/>
    </location>
</feature>
<feature type="site" description="Reactive bond" evidence="2">
    <location>
        <begin position="358"/>
        <end position="359"/>
    </location>
</feature>